<name>RLI1_ORYSJ</name>
<proteinExistence type="evidence at protein level"/>
<feature type="chain" id="PRO_0000456864" description="Myb family transcription factor RLI1">
    <location>
        <begin position="1"/>
        <end position="424"/>
    </location>
</feature>
<feature type="domain" description="HTH myb-type" evidence="2">
    <location>
        <begin position="238"/>
        <end position="298"/>
    </location>
</feature>
<feature type="DNA-binding region" description="H-T-H motif" evidence="2">
    <location>
        <begin position="269"/>
        <end position="294"/>
    </location>
</feature>
<feature type="region of interest" description="Disordered" evidence="3">
    <location>
        <begin position="144"/>
        <end position="165"/>
    </location>
</feature>
<feature type="coiled-coil region" evidence="1">
    <location>
        <begin position="326"/>
        <end position="391"/>
    </location>
</feature>
<feature type="short sequence motif" description="LHEQLE" evidence="10">
    <location>
        <begin position="342"/>
        <end position="347"/>
    </location>
</feature>
<feature type="splice variant" id="VSP_061712" description="In isoform RLI1a.">
    <original>GMQITEALRVQLDVQRRLHEQLEIQR</original>
    <variation>YLSFSLSASSNSFANQSQIPMECKCC</variation>
    <location>
        <begin position="325"/>
        <end position="350"/>
    </location>
</feature>
<feature type="splice variant" id="VSP_061713" description="In isoform RLI1a.">
    <location>
        <begin position="351"/>
        <end position="424"/>
    </location>
</feature>
<gene>
    <name evidence="7" type="primary">RLI1</name>
    <name evidence="8" type="synonym">HINGE1</name>
    <name evidence="10" type="ordered locus">Os04g0665600</name>
    <name evidence="10" type="ordered locus">LOC_Os04g56990</name>
    <name evidence="13" type="ORF">OsJ_16532</name>
    <name evidence="12" type="ORF">OSJNBa0087O24.8</name>
    <name evidence="11" type="ORF">OSNPB_040665600</name>
</gene>
<keyword id="KW-0010">Activator</keyword>
<keyword id="KW-0025">Alternative splicing</keyword>
<keyword id="KW-1069">Brassinosteroid biosynthesis</keyword>
<keyword id="KW-1070">Brassinosteroid signaling pathway</keyword>
<keyword id="KW-0175">Coiled coil</keyword>
<keyword id="KW-0238">DNA-binding</keyword>
<keyword id="KW-0444">Lipid biosynthesis</keyword>
<keyword id="KW-0443">Lipid metabolism</keyword>
<keyword id="KW-0539">Nucleus</keyword>
<keyword id="KW-1185">Reference proteome</keyword>
<keyword id="KW-0752">Steroid biosynthesis</keyword>
<keyword id="KW-0804">Transcription</keyword>
<keyword id="KW-0805">Transcription regulation</keyword>
<sequence length="424" mass="46308">MLQDIMNTKKIKLHDCHFGSPLCDPSPAPHLLSSAAAAGLSFHPGLVSSAAQHQQHGAGGWLHEEYYAPRSSPPSSLLAQTCVGSNATAFYAAENLPQFDFPALGTAAAAAAKAPFRSSESELYRPVDPLLLRADHSVRTYYVRPQKRDSGERTPLPPPSQQQHQDRIHGLFAGAPTTRLLSGEPKIHSFPPQVAAKPILPAMDAPSLQNQMENQLTRNCIGAATPVTPTGNLAGSGAPSKTRIRWTQDLHERFVDCVNQLGGADKATPKGILKLMNSDGLTIYHIKSHLQKYRIAKYMPASSEGKQLEKRATGNDMQNLDPKTGMQITEALRVQLDVQRRLHEQLEIQRNLQLRIEEQGKRLQKMFEDQLKASRSVMEPQELDDVVAFAAGDGDDDAFDDVDVQLLAVAGSGYDDAGFQSKIS</sequence>
<comment type="function">
    <text evidence="5 6">Transcription factor binding to specific DNA sequences of target genes promoters, such as the motif R1BS 5'-NAKATNCN-3' and the motif P1BS 5'-GNATATNC-3' to trigger their expression (PubMed:35640569). Nitrate-induced component involved in modulating phosphate (Pi) response and homeostasis together with PHR2; activates directly the expression of Pi starvation-induced (PSI) genes upon nitrate disponibility, thus triggering the nitrate-induced phosphate response (NIPR) promoting Pi uptake activity (PubMed:33316467, PubMed:35640569).</text>
</comment>
<comment type="function">
    <molecule>Isoform RLI1b</molecule>
    <text evidence="6">Binds preferentially to the P1BS motif 5'-GNATATNC-3' in target genes promoters.</text>
</comment>
<comment type="function">
    <molecule>Isoform RLI1a</molecule>
    <text evidence="4 6">Binds preferentially to the R1BS motif 5'-NAKATNCN-3' in target genes promoters, including several genes involved in the plant hormone signal transduction pathway (PubMed:35640569). Involved in the shoot architecture; positively regulates leaf inclination by affecting lamina joint cell elongation via the direct promotion of ILI4/BU1 and BC1 genes expression, especially in response to phosphate (Pi) availability (PubMed:29610209, PubMed:35640569). Regulates both brassinolide (BL) biosynthesis and signaling by directly activating BL-biosynthesis and signaling genes (PubMed:35640569).</text>
</comment>
<comment type="subunit">
    <text evidence="4 6">Interacts with SPX1 and SPX2 in the nucleus; these interactions prevent binding to the promoters of target genes, thus regulating negatively leaf inclination in response to phosphate (Pi) starvation.</text>
</comment>
<comment type="subunit">
    <molecule>Isoform RLI1b</molecule>
    <text evidence="6">Homodimer (PubMed:35640569). Interacts with PHR2 in the nucleus (PubMed:35640569).</text>
</comment>
<comment type="subcellular location">
    <subcellularLocation>
        <location evidence="2 5">Nucleus</location>
    </subcellularLocation>
</comment>
<comment type="alternative products">
    <event type="alternative splicing"/>
    <isoform>
        <id>Q0J995-1</id>
        <name evidence="9">RLI1b</name>
        <sequence type="displayed"/>
    </isoform>
    <isoform>
        <id>Q0J995-2</id>
        <name evidence="9">RLI1a</name>
        <sequence type="described" ref="VSP_061712 VSP_061713"/>
    </isoform>
</comment>
<comment type="tissue specificity">
    <text evidence="4 5">Mostly expressed in roots and leaves blades and, to a lower extent, in leaves sheaths, culms and panicles (PubMed:33316467). Localized in leaves lamina joints (PubMed:29610209).</text>
</comment>
<comment type="tissue specificity">
    <molecule>Isoform RLI1b</molecule>
    <text evidence="6">Expressed equally in shoots and roots.</text>
</comment>
<comment type="tissue specificity">
    <molecule>Isoform RLI1a</molecule>
    <text evidence="6">Mostly expressed in shoots and, to a lower extent, in roots.</text>
</comment>
<comment type="developmental stage">
    <text evidence="5">In roots, predominantly expressed in the vascular tissue (PubMed:33316467). In the elongation zone and root hair region, also detected in root hairs and epidermis (PubMed:33316467).</text>
</comment>
<comment type="induction">
    <text evidence="4 5">Highly expressed in the adaxial and abaxial cells of lamina joint under Pi-sufficient conditions (PubMed:29610209). Strongly induced by nitrate via PHR2-mediated transcription activation (PubMed:33316467).</text>
</comment>
<comment type="induction">
    <molecule>Isoform RLI1a</molecule>
    <text evidence="4 6">Strongly repressed by phosphate (Pi) deficiency, with a faster protein degradation (at protein level).</text>
</comment>
<comment type="induction">
    <molecule>Isoform RLI1b</molecule>
    <text evidence="6">Accumulates upon phosphate (Pi) deficiency, due to an increased protein stabilization (at protein level).</text>
</comment>
<comment type="disruption phenotype">
    <text evidence="4 5 6">Compact plants with reduced leaf inclination associated with shorter lamina joint length due to smaller adaxial and abaxial sclerenchyma cells (PubMed:29610209). Repressed nitrate induction of phosphate (Pi) starvation-induced (PSI) genes leading to an impaired Pi uptake activity (PubMed:33316467). Lower accumulation of ILI4/BU1 and BC1 in lamina joint cells (PubMed:29610209). Reduced levels of brassinolide (BL) content (PubMed:35640569). Strongly reduced biomass associated with leaf senescence symptoms and lower Pi concentration under Pi starvation in plants lacking both RLI1 and PHR2 (PubMed:35640569). Altered leaf inclination phenotypes of the rli1-1 single mutant are suppressed in the triple mutant spx1 spx2 rli1-1 (PubMed:29610209).</text>
</comment>
<comment type="similarity">
    <text evidence="10">Belongs to the MYB-CC family.</text>
</comment>
<comment type="sequence caution" evidence="10">
    <conflict type="erroneous initiation">
        <sequence resource="EMBL-CDS" id="CAE03585"/>
    </conflict>
    <text>Truncated N-terminus.</text>
</comment>
<comment type="sequence caution" evidence="10">
    <conflict type="erroneous initiation">
        <sequence resource="EMBL-CDS" id="EEE61857"/>
    </conflict>
    <text>Truncated N-terminus.</text>
</comment>
<accession>Q0J995</accession>
<accession>A0A0P0WG05</accession>
<accession>A0A345FZ89</accession>
<accession>B9FD60</accession>
<accession>Q7XPK2</accession>
<reference key="1">
    <citation type="journal article" date="2018" name="Plant Cell">
        <title>An SPX-RLI1 module regulates leaf inclination in response to phosphate availability in rice.</title>
        <authorList>
            <person name="Ruan W."/>
            <person name="Guo M."/>
            <person name="Xu L."/>
            <person name="Wang X."/>
            <person name="Zhao H."/>
            <person name="Wang J."/>
            <person name="Yi K."/>
        </authorList>
    </citation>
    <scope>NUCLEOTIDE SEQUENCE [MRNA] (ISOFORM RLI1A)</scope>
    <scope>FUNCTION</scope>
    <scope>DISRUPTION PHENOTYPE</scope>
    <scope>INTERACTION WITH SPX1</scope>
    <scope>INDUCTION BY PHOSPHATE</scope>
    <scope>REPRESSION BY PHOSPHATE DEPRIVATION</scope>
    <scope>TISSUE SPECIFICITY</scope>
    <source>
        <strain>cv. Nipponbare</strain>
    </source>
</reference>
<reference key="2">
    <citation type="journal article" date="2002" name="Nature">
        <title>Sequence and analysis of rice chromosome 4.</title>
        <authorList>
            <person name="Feng Q."/>
            <person name="Zhang Y."/>
            <person name="Hao P."/>
            <person name="Wang S."/>
            <person name="Fu G."/>
            <person name="Huang Y."/>
            <person name="Li Y."/>
            <person name="Zhu J."/>
            <person name="Liu Y."/>
            <person name="Hu X."/>
            <person name="Jia P."/>
            <person name="Zhang Y."/>
            <person name="Zhao Q."/>
            <person name="Ying K."/>
            <person name="Yu S."/>
            <person name="Tang Y."/>
            <person name="Weng Q."/>
            <person name="Zhang L."/>
            <person name="Lu Y."/>
            <person name="Mu J."/>
            <person name="Lu Y."/>
            <person name="Zhang L.S."/>
            <person name="Yu Z."/>
            <person name="Fan D."/>
            <person name="Liu X."/>
            <person name="Lu T."/>
            <person name="Li C."/>
            <person name="Wu Y."/>
            <person name="Sun T."/>
            <person name="Lei H."/>
            <person name="Li T."/>
            <person name="Hu H."/>
            <person name="Guan J."/>
            <person name="Wu M."/>
            <person name="Zhang R."/>
            <person name="Zhou B."/>
            <person name="Chen Z."/>
            <person name="Chen L."/>
            <person name="Jin Z."/>
            <person name="Wang R."/>
            <person name="Yin H."/>
            <person name="Cai Z."/>
            <person name="Ren S."/>
            <person name="Lv G."/>
            <person name="Gu W."/>
            <person name="Zhu G."/>
            <person name="Tu Y."/>
            <person name="Jia J."/>
            <person name="Zhang Y."/>
            <person name="Chen J."/>
            <person name="Kang H."/>
            <person name="Chen X."/>
            <person name="Shao C."/>
            <person name="Sun Y."/>
            <person name="Hu Q."/>
            <person name="Zhang X."/>
            <person name="Zhang W."/>
            <person name="Wang L."/>
            <person name="Ding C."/>
            <person name="Sheng H."/>
            <person name="Gu J."/>
            <person name="Chen S."/>
            <person name="Ni L."/>
            <person name="Zhu F."/>
            <person name="Chen W."/>
            <person name="Lan L."/>
            <person name="Lai Y."/>
            <person name="Cheng Z."/>
            <person name="Gu M."/>
            <person name="Jiang J."/>
            <person name="Li J."/>
            <person name="Hong G."/>
            <person name="Xue Y."/>
            <person name="Han B."/>
        </authorList>
    </citation>
    <scope>NUCLEOTIDE SEQUENCE [LARGE SCALE GENOMIC DNA]</scope>
    <source>
        <strain>cv. Nipponbare</strain>
    </source>
</reference>
<reference key="3">
    <citation type="journal article" date="2005" name="Nature">
        <title>The map-based sequence of the rice genome.</title>
        <authorList>
            <consortium name="International rice genome sequencing project (IRGSP)"/>
        </authorList>
    </citation>
    <scope>NUCLEOTIDE SEQUENCE [LARGE SCALE GENOMIC DNA]</scope>
    <source>
        <strain>cv. Nipponbare</strain>
    </source>
</reference>
<reference key="4">
    <citation type="journal article" date="2008" name="Nucleic Acids Res.">
        <title>The rice annotation project database (RAP-DB): 2008 update.</title>
        <authorList>
            <consortium name="The rice annotation project (RAP)"/>
        </authorList>
    </citation>
    <scope>GENOME REANNOTATION</scope>
    <source>
        <strain>cv. Nipponbare</strain>
    </source>
</reference>
<reference key="5">
    <citation type="journal article" date="2013" name="Rice">
        <title>Improvement of the Oryza sativa Nipponbare reference genome using next generation sequence and optical map data.</title>
        <authorList>
            <person name="Kawahara Y."/>
            <person name="de la Bastide M."/>
            <person name="Hamilton J.P."/>
            <person name="Kanamori H."/>
            <person name="McCombie W.R."/>
            <person name="Ouyang S."/>
            <person name="Schwartz D.C."/>
            <person name="Tanaka T."/>
            <person name="Wu J."/>
            <person name="Zhou S."/>
            <person name="Childs K.L."/>
            <person name="Davidson R.M."/>
            <person name="Lin H."/>
            <person name="Quesada-Ocampo L."/>
            <person name="Vaillancourt B."/>
            <person name="Sakai H."/>
            <person name="Lee S.S."/>
            <person name="Kim J."/>
            <person name="Numa H."/>
            <person name="Itoh T."/>
            <person name="Buell C.R."/>
            <person name="Matsumoto T."/>
        </authorList>
    </citation>
    <scope>GENOME REANNOTATION</scope>
    <source>
        <strain>cv. Nipponbare</strain>
    </source>
</reference>
<reference key="6">
    <citation type="journal article" date="2005" name="PLoS Biol.">
        <title>The genomes of Oryza sativa: a history of duplications.</title>
        <authorList>
            <person name="Yu J."/>
            <person name="Wang J."/>
            <person name="Lin W."/>
            <person name="Li S."/>
            <person name="Li H."/>
            <person name="Zhou J."/>
            <person name="Ni P."/>
            <person name="Dong W."/>
            <person name="Hu S."/>
            <person name="Zeng C."/>
            <person name="Zhang J."/>
            <person name="Zhang Y."/>
            <person name="Li R."/>
            <person name="Xu Z."/>
            <person name="Li S."/>
            <person name="Li X."/>
            <person name="Zheng H."/>
            <person name="Cong L."/>
            <person name="Lin L."/>
            <person name="Yin J."/>
            <person name="Geng J."/>
            <person name="Li G."/>
            <person name="Shi J."/>
            <person name="Liu J."/>
            <person name="Lv H."/>
            <person name="Li J."/>
            <person name="Wang J."/>
            <person name="Deng Y."/>
            <person name="Ran L."/>
            <person name="Shi X."/>
            <person name="Wang X."/>
            <person name="Wu Q."/>
            <person name="Li C."/>
            <person name="Ren X."/>
            <person name="Wang J."/>
            <person name="Wang X."/>
            <person name="Li D."/>
            <person name="Liu D."/>
            <person name="Zhang X."/>
            <person name="Ji Z."/>
            <person name="Zhao W."/>
            <person name="Sun Y."/>
            <person name="Zhang Z."/>
            <person name="Bao J."/>
            <person name="Han Y."/>
            <person name="Dong L."/>
            <person name="Ji J."/>
            <person name="Chen P."/>
            <person name="Wu S."/>
            <person name="Liu J."/>
            <person name="Xiao Y."/>
            <person name="Bu D."/>
            <person name="Tan J."/>
            <person name="Yang L."/>
            <person name="Ye C."/>
            <person name="Zhang J."/>
            <person name="Xu J."/>
            <person name="Zhou Y."/>
            <person name="Yu Y."/>
            <person name="Zhang B."/>
            <person name="Zhuang S."/>
            <person name="Wei H."/>
            <person name="Liu B."/>
            <person name="Lei M."/>
            <person name="Yu H."/>
            <person name="Li Y."/>
            <person name="Xu H."/>
            <person name="Wei S."/>
            <person name="He X."/>
            <person name="Fang L."/>
            <person name="Zhang Z."/>
            <person name="Zhang Y."/>
            <person name="Huang X."/>
            <person name="Su Z."/>
            <person name="Tong W."/>
            <person name="Li J."/>
            <person name="Tong Z."/>
            <person name="Li S."/>
            <person name="Ye J."/>
            <person name="Wang L."/>
            <person name="Fang L."/>
            <person name="Lei T."/>
            <person name="Chen C.-S."/>
            <person name="Chen H.-C."/>
            <person name="Xu Z."/>
            <person name="Li H."/>
            <person name="Huang H."/>
            <person name="Zhang F."/>
            <person name="Xu H."/>
            <person name="Li N."/>
            <person name="Zhao C."/>
            <person name="Li S."/>
            <person name="Dong L."/>
            <person name="Huang Y."/>
            <person name="Li L."/>
            <person name="Xi Y."/>
            <person name="Qi Q."/>
            <person name="Li W."/>
            <person name="Zhang B."/>
            <person name="Hu W."/>
            <person name="Zhang Y."/>
            <person name="Tian X."/>
            <person name="Jiao Y."/>
            <person name="Liang X."/>
            <person name="Jin J."/>
            <person name="Gao L."/>
            <person name="Zheng W."/>
            <person name="Hao B."/>
            <person name="Liu S.-M."/>
            <person name="Wang W."/>
            <person name="Yuan L."/>
            <person name="Cao M."/>
            <person name="McDermott J."/>
            <person name="Samudrala R."/>
            <person name="Wang J."/>
            <person name="Wong G.K.-S."/>
            <person name="Yang H."/>
        </authorList>
    </citation>
    <scope>NUCLEOTIDE SEQUENCE [LARGE SCALE GENOMIC DNA]</scope>
    <source>
        <strain>cv. Nipponbare</strain>
    </source>
</reference>
<reference key="7">
    <citation type="journal article" date="2021" name="Mol. Plant">
        <title>Modulation of nitrate-induced phosphate response by the MYB transcription factor RLI1/HINGE1 in the nucleus.</title>
        <authorList>
            <person name="Zhang Z."/>
            <person name="Li Z."/>
            <person name="Wang W."/>
            <person name="Jiang Z."/>
            <person name="Guo L."/>
            <person name="Wang X."/>
            <person name="Qian Y."/>
            <person name="Huang X."/>
            <person name="Liu Y."/>
            <person name="Liu X."/>
            <person name="Qiu Y."/>
            <person name="Li A."/>
            <person name="Yan Y."/>
            <person name="Xie J."/>
            <person name="Cao S."/>
            <person name="Kopriva S."/>
            <person name="Li L."/>
            <person name="Kong F."/>
            <person name="Liu B."/>
            <person name="Wang Y."/>
            <person name="Hu B."/>
            <person name="Chu C."/>
        </authorList>
    </citation>
    <scope>FUNCTION</scope>
    <scope>DISRUPTION PHENOTYPE</scope>
    <scope>INDUCTION BY NITRATE</scope>
    <scope>SUBCELLULAR LOCATION</scope>
    <scope>TISSUE SPECIFICITY</scope>
    <scope>DEVELOPMENTAL STAGE</scope>
    <source>
        <strain>cv. Hwayoung</strain>
        <strain>cv. Zhonghua 11</strain>
    </source>
</reference>
<reference key="8">
    <citation type="journal article" date="2022" name="Plant Cell">
        <title>Alternative splicing of REGULATOR OF LEAF INCLINATION 1 modulates phosphate starvation signaling and plant growth.</title>
        <authorList>
            <person name="Guo M."/>
            <person name="Zhang Y."/>
            <person name="Jia X."/>
            <person name="Wang X."/>
            <person name="Zhang Y."/>
            <person name="Liu J."/>
            <person name="Yang Q."/>
            <person name="Ruan W."/>
            <person name="Yi K."/>
        </authorList>
    </citation>
    <scope>ALTERNATIVE SPLICING</scope>
    <scope>FUNCTION</scope>
    <scope>DISRUPTION PHENOTYPE</scope>
    <scope>INDUCTION BY PHOSPHATE</scope>
    <scope>TISSUE SPECIFICITY</scope>
    <scope>INTERACTION WITH PHR2; SPX1 AND SPX2</scope>
    <source>
        <strain>cv. Nipponbare</strain>
    </source>
</reference>
<dbReference type="EMBL" id="MF960126">
    <property type="protein sequence ID" value="AXG50288.1"/>
    <property type="molecule type" value="mRNA"/>
</dbReference>
<dbReference type="EMBL" id="AL606646">
    <property type="protein sequence ID" value="CAE03585.1"/>
    <property type="status" value="ALT_INIT"/>
    <property type="molecule type" value="Genomic_DNA"/>
</dbReference>
<dbReference type="EMBL" id="AP008210">
    <property type="protein sequence ID" value="BAF16092.1"/>
    <property type="molecule type" value="Genomic_DNA"/>
</dbReference>
<dbReference type="EMBL" id="AP014960">
    <property type="protein sequence ID" value="BAS91503.1"/>
    <property type="molecule type" value="Genomic_DNA"/>
</dbReference>
<dbReference type="EMBL" id="CM000141">
    <property type="protein sequence ID" value="EEE61857.1"/>
    <property type="status" value="ALT_INIT"/>
    <property type="molecule type" value="Genomic_DNA"/>
</dbReference>
<dbReference type="RefSeq" id="XP_015636269.1">
    <molecule id="Q0J995-1"/>
    <property type="nucleotide sequence ID" value="XM_015780783.1"/>
</dbReference>
<dbReference type="RefSeq" id="XP_015636270.1">
    <molecule id="Q0J995-1"/>
    <property type="nucleotide sequence ID" value="XM_015780784.1"/>
</dbReference>
<dbReference type="RefSeq" id="XP_015636271.1">
    <molecule id="Q0J995-1"/>
    <property type="nucleotide sequence ID" value="XM_015780785.1"/>
</dbReference>
<dbReference type="RefSeq" id="XP_015636272.1">
    <molecule id="Q0J995-1"/>
    <property type="nucleotide sequence ID" value="XM_015780786.1"/>
</dbReference>
<dbReference type="SMR" id="Q0J995"/>
<dbReference type="STRING" id="39947.Q0J995"/>
<dbReference type="PaxDb" id="39947-Q0J995"/>
<dbReference type="EnsemblPlants" id="Os04t0665600-01">
    <molecule id="Q0J995-1"/>
    <property type="protein sequence ID" value="Os04t0665600-01"/>
    <property type="gene ID" value="Os04g0665600"/>
</dbReference>
<dbReference type="Gramene" id="Os04t0665600-01">
    <molecule id="Q0J995-1"/>
    <property type="protein sequence ID" value="Os04t0665600-01"/>
    <property type="gene ID" value="Os04g0665600"/>
</dbReference>
<dbReference type="KEGG" id="dosa:Os04g0665600"/>
<dbReference type="KEGG" id="osa:4337318"/>
<dbReference type="eggNOG" id="ENOG502QW8T">
    <property type="taxonomic scope" value="Eukaryota"/>
</dbReference>
<dbReference type="HOGENOM" id="CLU_051939_1_0_1"/>
<dbReference type="InParanoid" id="Q0J995"/>
<dbReference type="OMA" id="DGHDDAF"/>
<dbReference type="OrthoDB" id="551907at2759"/>
<dbReference type="Proteomes" id="UP000000763">
    <property type="component" value="Chromosome 4"/>
</dbReference>
<dbReference type="Proteomes" id="UP000007752">
    <property type="component" value="Chromosome 4"/>
</dbReference>
<dbReference type="Proteomes" id="UP000059680">
    <property type="component" value="Chromosome 4"/>
</dbReference>
<dbReference type="GO" id="GO:0005634">
    <property type="term" value="C:nucleus"/>
    <property type="evidence" value="ECO:0000314"/>
    <property type="project" value="UniProtKB"/>
</dbReference>
<dbReference type="GO" id="GO:0003700">
    <property type="term" value="F:DNA-binding transcription factor activity"/>
    <property type="evidence" value="ECO:0000314"/>
    <property type="project" value="UniProtKB"/>
</dbReference>
<dbReference type="GO" id="GO:0042803">
    <property type="term" value="F:protein homodimerization activity"/>
    <property type="evidence" value="ECO:0000314"/>
    <property type="project" value="UniProtKB"/>
</dbReference>
<dbReference type="GO" id="GO:0043565">
    <property type="term" value="F:sequence-specific DNA binding"/>
    <property type="evidence" value="ECO:0000314"/>
    <property type="project" value="UniProtKB"/>
</dbReference>
<dbReference type="GO" id="GO:0016132">
    <property type="term" value="P:brassinosteroid biosynthetic process"/>
    <property type="evidence" value="ECO:0000314"/>
    <property type="project" value="UniProtKB"/>
</dbReference>
<dbReference type="GO" id="GO:0009742">
    <property type="term" value="P:brassinosteroid mediated signaling pathway"/>
    <property type="evidence" value="ECO:0000314"/>
    <property type="project" value="UniProtKB"/>
</dbReference>
<dbReference type="GO" id="GO:0016036">
    <property type="term" value="P:cellular response to phosphate starvation"/>
    <property type="evidence" value="ECO:0000315"/>
    <property type="project" value="UniProtKB"/>
</dbReference>
<dbReference type="GO" id="GO:0051511">
    <property type="term" value="P:negative regulation of unidimensional cell growth"/>
    <property type="evidence" value="ECO:0000315"/>
    <property type="project" value="UniProtKB"/>
</dbReference>
<dbReference type="GO" id="GO:0045893">
    <property type="term" value="P:positive regulation of DNA-templated transcription"/>
    <property type="evidence" value="ECO:0000314"/>
    <property type="project" value="UniProtKB"/>
</dbReference>
<dbReference type="GO" id="GO:2000024">
    <property type="term" value="P:regulation of leaf development"/>
    <property type="evidence" value="ECO:0000315"/>
    <property type="project" value="UniProtKB"/>
</dbReference>
<dbReference type="GO" id="GO:0010966">
    <property type="term" value="P:regulation of phosphate transport"/>
    <property type="evidence" value="ECO:0000315"/>
    <property type="project" value="UniProtKB"/>
</dbReference>
<dbReference type="GO" id="GO:0010167">
    <property type="term" value="P:response to nitrate"/>
    <property type="evidence" value="ECO:0000315"/>
    <property type="project" value="UniProtKB"/>
</dbReference>
<dbReference type="FunFam" id="1.10.10.60:FF:000002">
    <property type="entry name" value="Myb family transcription factor"/>
    <property type="match status" value="1"/>
</dbReference>
<dbReference type="Gene3D" id="1.10.10.60">
    <property type="entry name" value="Homeodomain-like"/>
    <property type="match status" value="1"/>
</dbReference>
<dbReference type="InterPro" id="IPR009057">
    <property type="entry name" value="Homeodomain-like_sf"/>
</dbReference>
<dbReference type="InterPro" id="IPR025756">
    <property type="entry name" value="Myb_CC_LHEQLE"/>
</dbReference>
<dbReference type="InterPro" id="IPR017930">
    <property type="entry name" value="Myb_dom"/>
</dbReference>
<dbReference type="InterPro" id="IPR006447">
    <property type="entry name" value="Myb_dom_plants"/>
</dbReference>
<dbReference type="InterPro" id="IPR046955">
    <property type="entry name" value="PHR1-like"/>
</dbReference>
<dbReference type="InterPro" id="IPR001005">
    <property type="entry name" value="SANT/Myb"/>
</dbReference>
<dbReference type="NCBIfam" id="TIGR01557">
    <property type="entry name" value="myb_SHAQKYF"/>
    <property type="match status" value="1"/>
</dbReference>
<dbReference type="PANTHER" id="PTHR31499:SF80">
    <property type="entry name" value="HTH MYB-TYPE DOMAIN-CONTAINING PROTEIN"/>
    <property type="match status" value="1"/>
</dbReference>
<dbReference type="PANTHER" id="PTHR31499">
    <property type="entry name" value="MYB FAMILY TRANSCRIPTION FACTOR PHL11"/>
    <property type="match status" value="1"/>
</dbReference>
<dbReference type="Pfam" id="PF14379">
    <property type="entry name" value="Myb_CC_LHEQLE"/>
    <property type="match status" value="1"/>
</dbReference>
<dbReference type="Pfam" id="PF00249">
    <property type="entry name" value="Myb_DNA-binding"/>
    <property type="match status" value="1"/>
</dbReference>
<dbReference type="SUPFAM" id="SSF46689">
    <property type="entry name" value="Homeodomain-like"/>
    <property type="match status" value="1"/>
</dbReference>
<dbReference type="PROSITE" id="PS51294">
    <property type="entry name" value="HTH_MYB"/>
    <property type="match status" value="1"/>
</dbReference>
<organism>
    <name type="scientific">Oryza sativa subsp. japonica</name>
    <name type="common">Rice</name>
    <dbReference type="NCBI Taxonomy" id="39947"/>
    <lineage>
        <taxon>Eukaryota</taxon>
        <taxon>Viridiplantae</taxon>
        <taxon>Streptophyta</taxon>
        <taxon>Embryophyta</taxon>
        <taxon>Tracheophyta</taxon>
        <taxon>Spermatophyta</taxon>
        <taxon>Magnoliopsida</taxon>
        <taxon>Liliopsida</taxon>
        <taxon>Poales</taxon>
        <taxon>Poaceae</taxon>
        <taxon>BOP clade</taxon>
        <taxon>Oryzoideae</taxon>
        <taxon>Oryzeae</taxon>
        <taxon>Oryzinae</taxon>
        <taxon>Oryza</taxon>
        <taxon>Oryza sativa</taxon>
    </lineage>
</organism>
<protein>
    <recommendedName>
        <fullName evidence="10">Myb family transcription factor RLI1</fullName>
    </recommendedName>
    <alternativeName>
        <fullName evidence="8">Protein HIGHLY INDUCED BY NITRATE GENE 1</fullName>
    </alternativeName>
    <alternativeName>
        <fullName evidence="7">Protein REGULATOR OF LEAF INCLINATION 1</fullName>
    </alternativeName>
</protein>
<evidence type="ECO:0000255" key="1"/>
<evidence type="ECO:0000255" key="2">
    <source>
        <dbReference type="PROSITE-ProRule" id="PRU00625"/>
    </source>
</evidence>
<evidence type="ECO:0000256" key="3">
    <source>
        <dbReference type="SAM" id="MobiDB-lite"/>
    </source>
</evidence>
<evidence type="ECO:0000269" key="4">
    <source>
    </source>
</evidence>
<evidence type="ECO:0000269" key="5">
    <source>
    </source>
</evidence>
<evidence type="ECO:0000269" key="6">
    <source>
    </source>
</evidence>
<evidence type="ECO:0000303" key="7">
    <source>
    </source>
</evidence>
<evidence type="ECO:0000303" key="8">
    <source>
    </source>
</evidence>
<evidence type="ECO:0000303" key="9">
    <source>
    </source>
</evidence>
<evidence type="ECO:0000305" key="10"/>
<evidence type="ECO:0000312" key="11">
    <source>
        <dbReference type="EMBL" id="BAS91503.1"/>
    </source>
</evidence>
<evidence type="ECO:0000312" key="12">
    <source>
        <dbReference type="EMBL" id="CAE03585.1"/>
    </source>
</evidence>
<evidence type="ECO:0000312" key="13">
    <source>
        <dbReference type="EMBL" id="EEE61857.1"/>
    </source>
</evidence>